<proteinExistence type="inferred from homology"/>
<gene>
    <name evidence="1" type="primary">rpoZ</name>
    <name type="ordered locus">ECUMN_4165</name>
</gene>
<reference key="1">
    <citation type="journal article" date="2009" name="PLoS Genet.">
        <title>Organised genome dynamics in the Escherichia coli species results in highly diverse adaptive paths.</title>
        <authorList>
            <person name="Touchon M."/>
            <person name="Hoede C."/>
            <person name="Tenaillon O."/>
            <person name="Barbe V."/>
            <person name="Baeriswyl S."/>
            <person name="Bidet P."/>
            <person name="Bingen E."/>
            <person name="Bonacorsi S."/>
            <person name="Bouchier C."/>
            <person name="Bouvet O."/>
            <person name="Calteau A."/>
            <person name="Chiapello H."/>
            <person name="Clermont O."/>
            <person name="Cruveiller S."/>
            <person name="Danchin A."/>
            <person name="Diard M."/>
            <person name="Dossat C."/>
            <person name="Karoui M.E."/>
            <person name="Frapy E."/>
            <person name="Garry L."/>
            <person name="Ghigo J.M."/>
            <person name="Gilles A.M."/>
            <person name="Johnson J."/>
            <person name="Le Bouguenec C."/>
            <person name="Lescat M."/>
            <person name="Mangenot S."/>
            <person name="Martinez-Jehanne V."/>
            <person name="Matic I."/>
            <person name="Nassif X."/>
            <person name="Oztas S."/>
            <person name="Petit M.A."/>
            <person name="Pichon C."/>
            <person name="Rouy Z."/>
            <person name="Ruf C.S."/>
            <person name="Schneider D."/>
            <person name="Tourret J."/>
            <person name="Vacherie B."/>
            <person name="Vallenet D."/>
            <person name="Medigue C."/>
            <person name="Rocha E.P.C."/>
            <person name="Denamur E."/>
        </authorList>
    </citation>
    <scope>NUCLEOTIDE SEQUENCE [LARGE SCALE GENOMIC DNA]</scope>
    <source>
        <strain>UMN026 / ExPEC</strain>
    </source>
</reference>
<organism>
    <name type="scientific">Escherichia coli O17:K52:H18 (strain UMN026 / ExPEC)</name>
    <dbReference type="NCBI Taxonomy" id="585056"/>
    <lineage>
        <taxon>Bacteria</taxon>
        <taxon>Pseudomonadati</taxon>
        <taxon>Pseudomonadota</taxon>
        <taxon>Gammaproteobacteria</taxon>
        <taxon>Enterobacterales</taxon>
        <taxon>Enterobacteriaceae</taxon>
        <taxon>Escherichia</taxon>
    </lineage>
</organism>
<evidence type="ECO:0000255" key="1">
    <source>
        <dbReference type="HAMAP-Rule" id="MF_00366"/>
    </source>
</evidence>
<keyword id="KW-0240">DNA-directed RNA polymerase</keyword>
<keyword id="KW-0548">Nucleotidyltransferase</keyword>
<keyword id="KW-0804">Transcription</keyword>
<keyword id="KW-0808">Transferase</keyword>
<name>RPOZ_ECOLU</name>
<sequence length="91" mass="10237">MARVTVQDAVEKIGNRFDLVLVAARRARQMQVGGKDPLVPEENDKTTVIALREIEEGLINNQILDVRERQEQQEQEAAELQAVTAIAEGRR</sequence>
<comment type="function">
    <text evidence="1">Promotes RNA polymerase assembly. Latches the N- and C-terminal regions of the beta' subunit thereby facilitating its interaction with the beta and alpha subunits.</text>
</comment>
<comment type="catalytic activity">
    <reaction evidence="1">
        <text>RNA(n) + a ribonucleoside 5'-triphosphate = RNA(n+1) + diphosphate</text>
        <dbReference type="Rhea" id="RHEA:21248"/>
        <dbReference type="Rhea" id="RHEA-COMP:14527"/>
        <dbReference type="Rhea" id="RHEA-COMP:17342"/>
        <dbReference type="ChEBI" id="CHEBI:33019"/>
        <dbReference type="ChEBI" id="CHEBI:61557"/>
        <dbReference type="ChEBI" id="CHEBI:140395"/>
        <dbReference type="EC" id="2.7.7.6"/>
    </reaction>
</comment>
<comment type="subunit">
    <text evidence="1">The RNAP catalytic core consists of 2 alpha, 1 beta, 1 beta' and 1 omega subunit. When a sigma factor is associated with the core the holoenzyme is formed, which can initiate transcription.</text>
</comment>
<comment type="similarity">
    <text evidence="1">Belongs to the RNA polymerase subunit omega family.</text>
</comment>
<feature type="chain" id="PRO_1000121220" description="DNA-directed RNA polymerase subunit omega">
    <location>
        <begin position="1"/>
        <end position="91"/>
    </location>
</feature>
<protein>
    <recommendedName>
        <fullName evidence="1">DNA-directed RNA polymerase subunit omega</fullName>
        <shortName evidence="1">RNAP omega subunit</shortName>
        <ecNumber evidence="1">2.7.7.6</ecNumber>
    </recommendedName>
    <alternativeName>
        <fullName evidence="1">RNA polymerase omega subunit</fullName>
    </alternativeName>
    <alternativeName>
        <fullName evidence="1">Transcriptase subunit omega</fullName>
    </alternativeName>
</protein>
<dbReference type="EC" id="2.7.7.6" evidence="1"/>
<dbReference type="EMBL" id="CU928163">
    <property type="protein sequence ID" value="CAR15306.1"/>
    <property type="molecule type" value="Genomic_DNA"/>
</dbReference>
<dbReference type="RefSeq" id="WP_000135058.1">
    <property type="nucleotide sequence ID" value="NC_011751.1"/>
</dbReference>
<dbReference type="RefSeq" id="YP_002414802.1">
    <property type="nucleotide sequence ID" value="NC_011751.1"/>
</dbReference>
<dbReference type="SMR" id="B7NEV3"/>
<dbReference type="STRING" id="585056.ECUMN_4165"/>
<dbReference type="GeneID" id="98390719"/>
<dbReference type="KEGG" id="eum:ECUMN_4165"/>
<dbReference type="PATRIC" id="fig|585056.7.peg.4338"/>
<dbReference type="HOGENOM" id="CLU_125406_5_3_6"/>
<dbReference type="PRO" id="PR:B7NEV3"/>
<dbReference type="Proteomes" id="UP000007097">
    <property type="component" value="Chromosome"/>
</dbReference>
<dbReference type="GO" id="GO:0000428">
    <property type="term" value="C:DNA-directed RNA polymerase complex"/>
    <property type="evidence" value="ECO:0007669"/>
    <property type="project" value="UniProtKB-KW"/>
</dbReference>
<dbReference type="GO" id="GO:0003677">
    <property type="term" value="F:DNA binding"/>
    <property type="evidence" value="ECO:0007669"/>
    <property type="project" value="UniProtKB-UniRule"/>
</dbReference>
<dbReference type="GO" id="GO:0003899">
    <property type="term" value="F:DNA-directed RNA polymerase activity"/>
    <property type="evidence" value="ECO:0007669"/>
    <property type="project" value="UniProtKB-UniRule"/>
</dbReference>
<dbReference type="GO" id="GO:0006351">
    <property type="term" value="P:DNA-templated transcription"/>
    <property type="evidence" value="ECO:0007669"/>
    <property type="project" value="UniProtKB-UniRule"/>
</dbReference>
<dbReference type="FunFam" id="3.90.940.10:FF:000001">
    <property type="entry name" value="DNA-directed RNA polymerase subunit omega"/>
    <property type="match status" value="1"/>
</dbReference>
<dbReference type="Gene3D" id="3.90.940.10">
    <property type="match status" value="1"/>
</dbReference>
<dbReference type="HAMAP" id="MF_00366">
    <property type="entry name" value="RNApol_bact_RpoZ"/>
    <property type="match status" value="1"/>
</dbReference>
<dbReference type="InterPro" id="IPR003716">
    <property type="entry name" value="DNA-dir_RNA_pol_omega"/>
</dbReference>
<dbReference type="InterPro" id="IPR006110">
    <property type="entry name" value="Pol_omega/Rpo6/RPB6"/>
</dbReference>
<dbReference type="InterPro" id="IPR036161">
    <property type="entry name" value="RPB6/omega-like_sf"/>
</dbReference>
<dbReference type="NCBIfam" id="TIGR00690">
    <property type="entry name" value="rpoZ"/>
    <property type="match status" value="1"/>
</dbReference>
<dbReference type="PANTHER" id="PTHR34476">
    <property type="entry name" value="DNA-DIRECTED RNA POLYMERASE SUBUNIT OMEGA"/>
    <property type="match status" value="1"/>
</dbReference>
<dbReference type="PANTHER" id="PTHR34476:SF1">
    <property type="entry name" value="DNA-DIRECTED RNA POLYMERASE SUBUNIT OMEGA"/>
    <property type="match status" value="1"/>
</dbReference>
<dbReference type="Pfam" id="PF01192">
    <property type="entry name" value="RNA_pol_Rpb6"/>
    <property type="match status" value="1"/>
</dbReference>
<dbReference type="SMART" id="SM01409">
    <property type="entry name" value="RNA_pol_Rpb6"/>
    <property type="match status" value="1"/>
</dbReference>
<dbReference type="SUPFAM" id="SSF63562">
    <property type="entry name" value="RPB6/omega subunit-like"/>
    <property type="match status" value="1"/>
</dbReference>
<accession>B7NEV3</accession>